<keyword id="KW-0025">Alternative splicing</keyword>
<keyword id="KW-0067">ATP-binding</keyword>
<keyword id="KW-0175">Coiled coil</keyword>
<keyword id="KW-0963">Cytoplasm</keyword>
<keyword id="KW-0206">Cytoskeleton</keyword>
<keyword id="KW-0493">Microtubule</keyword>
<keyword id="KW-0505">Motor protein</keyword>
<keyword id="KW-0547">Nucleotide-binding</keyword>
<keyword id="KW-1185">Reference proteome</keyword>
<keyword id="KW-0677">Repeat</keyword>
<organism>
    <name type="scientific">Arabidopsis thaliana</name>
    <name type="common">Mouse-ear cress</name>
    <dbReference type="NCBI Taxonomy" id="3702"/>
    <lineage>
        <taxon>Eukaryota</taxon>
        <taxon>Viridiplantae</taxon>
        <taxon>Streptophyta</taxon>
        <taxon>Embryophyta</taxon>
        <taxon>Tracheophyta</taxon>
        <taxon>Spermatophyta</taxon>
        <taxon>Magnoliopsida</taxon>
        <taxon>eudicotyledons</taxon>
        <taxon>Gunneridae</taxon>
        <taxon>Pentapetalae</taxon>
        <taxon>rosids</taxon>
        <taxon>malvids</taxon>
        <taxon>Brassicales</taxon>
        <taxon>Brassicaceae</taxon>
        <taxon>Camelineae</taxon>
        <taxon>Arabidopsis</taxon>
    </lineage>
</organism>
<protein>
    <recommendedName>
        <fullName evidence="14">Kinesin-like protein KIN-UC</fullName>
    </recommendedName>
    <alternativeName>
        <fullName evidence="13">AtKINUc</fullName>
    </alternativeName>
    <alternativeName>
        <fullName evidence="12">Protein ARMADILLO REPEAT KINESIN1</fullName>
    </alternativeName>
    <alternativeName>
        <fullName evidence="14">Protein ARMADILLO REPEAT-CONTAINING KINESIN 1</fullName>
    </alternativeName>
    <alternativeName>
        <fullName evidence="11">Protein CA-ROP2 ENHANCER 1</fullName>
    </alternativeName>
    <alternativeName>
        <fullName evidence="11">Protein MORPHOGENESIS OF ROOT HAIR 2</fullName>
    </alternativeName>
</protein>
<sequence length="1051" mass="117375">MSSSNSSSAVRSSAKHAAERIQQHLPPNSNHAVSLSSSSLNLPARTSIVAPGIAHSSRLKDRPSASSSSSSSSVSASSPSTRRSGTPVRRSQSKDFDDDNDPGRVRVSVRVRPRNGEELISDADFADLVELQPEIKRLKLRKNNWNSESYKFDEVFTDTASQKRVYEGVAKPVVEGVLSGYNGTIMAYGQTGTGKTYTVGKIGKDDAAERGIMVRALEDILLNASSASISVEISYLQLYMETIQDLLAPEKNNISINEDAKTGEVSVPGATVVNIQDLDHFLQVLQVGETNRHAANTKMNTESSRSHAILTVYVRRAMNEKTEKAKPESLGDKAIPRVRKSKLLIVDLAGSERINKSGTDGHMIEEAKFINLSLTSLGKCINALAEGSSHIPTRDSKLTRLLRDSFGGSARTSLIITIGPSARYHAETTSTIMFGQRAMKIVNMVKLKEEFDYESLCRKLETQVDHLTAEVERQNKLRNSEKHELEKRLRECENSFAEAEKNAVTRSKFLEKENTRLELSMKELLKDLQLQKDQCDLMHDKAIQLEMKLKNTKQQQLENSAYEAKLADTSQVYEKKIAELVQRVEDEQARSTNAEHQLTEMKNILSKQQKSIHEQEKGNYQYQRELAETTHTYESKIAELQKKLEGENARSNAAEDQLRQMKRLISDRQVISQENEEANELKIKLEELSQMYESTVDELQTVKLDYDDLLQQKEKLGEEVRDMKERLLLEEKQRKQMESELSKLKKNLRESENVVEEKRYMKEDLSKGSAESGAQTGSQRSQGLKKSLSGQRATMARLCEEVGIQKILQLIKSEDLEVQIQAVKVVANLAAEEANQVKIVEEGGVEALLMLVQSSQNSTILRVASGAIANLAMNEKSQDLIMNKGGAQLLAKMVTKTDDPQTLRMVAGALANLCGNEKFLKLLKEEEGIKGLLTMAQSGNIDIIAQVARGMANFAKCETREIMQGRRKGRSLLLEEGVLEWLTSNSHIDSASTQRHIELALCHLAQNEENANDFKRTGSVTEIVRISVESSRDDIRSLAKKILKTNPYFSS</sequence>
<reference key="1">
    <citation type="journal article" date="2007" name="PLoS ONE">
        <title>A mutation in MRH2 kinesin enhances the root hair tip growth defect caused by constitutively activated ROP2 small GTPase in Arabidopsis.</title>
        <authorList>
            <person name="Yang G."/>
            <person name="Gao P."/>
            <person name="Zhang H."/>
            <person name="Huang S."/>
            <person name="Zheng Z.-L."/>
        </authorList>
    </citation>
    <scope>NUCLEOTIDE SEQUENCE [MRNA] (ISOFORM 1)</scope>
    <scope>FUNCTION</scope>
    <scope>TISSUE SPECIFICITY</scope>
    <scope>INTERACTION WITH ACTIN AND TUBULIN</scope>
</reference>
<reference key="2">
    <citation type="journal article" date="2008" name="Plant J.">
        <title>Armadillo repeat-containing kinesins and a NIMA-related kinase are required for epidermal-cell morphogenesis in Arabidopsis.</title>
        <authorList>
            <person name="Sakai T."/>
            <person name="van der Honing H."/>
            <person name="Nishioka M."/>
            <person name="Uehara Y."/>
            <person name="Takahashi M."/>
            <person name="Fujisawa N."/>
            <person name="Saji K."/>
            <person name="Seki M."/>
            <person name="Shinozaki K."/>
            <person name="Jones M.A."/>
            <person name="Smirnoff N."/>
            <person name="Okada K."/>
            <person name="Wasteneys G.O."/>
        </authorList>
    </citation>
    <scope>NUCLEOTIDE SEQUENCE [MRNA] (ISOFORM 1)</scope>
    <scope>FUNCTION</scope>
    <scope>TISSUE SPECIFICITY</scope>
    <scope>INTERACTION WITH NEK5</scope>
    <source>
        <strain>cv. Landsberg erecta</strain>
    </source>
</reference>
<reference key="3">
    <citation type="journal article" date="2000" name="Nature">
        <title>Sequence and analysis of chromosome 3 of the plant Arabidopsis thaliana.</title>
        <authorList>
            <person name="Salanoubat M."/>
            <person name="Lemcke K."/>
            <person name="Rieger M."/>
            <person name="Ansorge W."/>
            <person name="Unseld M."/>
            <person name="Fartmann B."/>
            <person name="Valle G."/>
            <person name="Bloecker H."/>
            <person name="Perez-Alonso M."/>
            <person name="Obermaier B."/>
            <person name="Delseny M."/>
            <person name="Boutry M."/>
            <person name="Grivell L.A."/>
            <person name="Mache R."/>
            <person name="Puigdomenech P."/>
            <person name="De Simone V."/>
            <person name="Choisne N."/>
            <person name="Artiguenave F."/>
            <person name="Robert C."/>
            <person name="Brottier P."/>
            <person name="Wincker P."/>
            <person name="Cattolico L."/>
            <person name="Weissenbach J."/>
            <person name="Saurin W."/>
            <person name="Quetier F."/>
            <person name="Schaefer M."/>
            <person name="Mueller-Auer S."/>
            <person name="Gabel C."/>
            <person name="Fuchs M."/>
            <person name="Benes V."/>
            <person name="Wurmbach E."/>
            <person name="Drzonek H."/>
            <person name="Erfle H."/>
            <person name="Jordan N."/>
            <person name="Bangert S."/>
            <person name="Wiedelmann R."/>
            <person name="Kranz H."/>
            <person name="Voss H."/>
            <person name="Holland R."/>
            <person name="Brandt P."/>
            <person name="Nyakatura G."/>
            <person name="Vezzi A."/>
            <person name="D'Angelo M."/>
            <person name="Pallavicini A."/>
            <person name="Toppo S."/>
            <person name="Simionati B."/>
            <person name="Conrad A."/>
            <person name="Hornischer K."/>
            <person name="Kauer G."/>
            <person name="Loehnert T.-H."/>
            <person name="Nordsiek G."/>
            <person name="Reichelt J."/>
            <person name="Scharfe M."/>
            <person name="Schoen O."/>
            <person name="Bargues M."/>
            <person name="Terol J."/>
            <person name="Climent J."/>
            <person name="Navarro P."/>
            <person name="Collado C."/>
            <person name="Perez-Perez A."/>
            <person name="Ottenwaelder B."/>
            <person name="Duchemin D."/>
            <person name="Cooke R."/>
            <person name="Laudie M."/>
            <person name="Berger-Llauro C."/>
            <person name="Purnelle B."/>
            <person name="Masuy D."/>
            <person name="de Haan M."/>
            <person name="Maarse A.C."/>
            <person name="Alcaraz J.-P."/>
            <person name="Cottet A."/>
            <person name="Casacuberta E."/>
            <person name="Monfort A."/>
            <person name="Argiriou A."/>
            <person name="Flores M."/>
            <person name="Liguori R."/>
            <person name="Vitale D."/>
            <person name="Mannhaupt G."/>
            <person name="Haase D."/>
            <person name="Schoof H."/>
            <person name="Rudd S."/>
            <person name="Zaccaria P."/>
            <person name="Mewes H.-W."/>
            <person name="Mayer K.F.X."/>
            <person name="Kaul S."/>
            <person name="Town C.D."/>
            <person name="Koo H.L."/>
            <person name="Tallon L.J."/>
            <person name="Jenkins J."/>
            <person name="Rooney T."/>
            <person name="Rizzo M."/>
            <person name="Walts A."/>
            <person name="Utterback T."/>
            <person name="Fujii C.Y."/>
            <person name="Shea T.P."/>
            <person name="Creasy T.H."/>
            <person name="Haas B."/>
            <person name="Maiti R."/>
            <person name="Wu D."/>
            <person name="Peterson J."/>
            <person name="Van Aken S."/>
            <person name="Pai G."/>
            <person name="Militscher J."/>
            <person name="Sellers P."/>
            <person name="Gill J.E."/>
            <person name="Feldblyum T.V."/>
            <person name="Preuss D."/>
            <person name="Lin X."/>
            <person name="Nierman W.C."/>
            <person name="Salzberg S.L."/>
            <person name="White O."/>
            <person name="Venter J.C."/>
            <person name="Fraser C.M."/>
            <person name="Kaneko T."/>
            <person name="Nakamura Y."/>
            <person name="Sato S."/>
            <person name="Kato T."/>
            <person name="Asamizu E."/>
            <person name="Sasamoto S."/>
            <person name="Kimura T."/>
            <person name="Idesawa K."/>
            <person name="Kawashima K."/>
            <person name="Kishida Y."/>
            <person name="Kiyokawa C."/>
            <person name="Kohara M."/>
            <person name="Matsumoto M."/>
            <person name="Matsuno A."/>
            <person name="Muraki A."/>
            <person name="Nakayama S."/>
            <person name="Nakazaki N."/>
            <person name="Shinpo S."/>
            <person name="Takeuchi C."/>
            <person name="Wada T."/>
            <person name="Watanabe A."/>
            <person name="Yamada M."/>
            <person name="Yasuda M."/>
            <person name="Tabata S."/>
        </authorList>
    </citation>
    <scope>NUCLEOTIDE SEQUENCE [LARGE SCALE GENOMIC DNA]</scope>
    <source>
        <strain>cv. Columbia</strain>
    </source>
</reference>
<reference key="4">
    <citation type="journal article" date="2017" name="Plant J.">
        <title>Araport11: a complete reannotation of the Arabidopsis thaliana reference genome.</title>
        <authorList>
            <person name="Cheng C.Y."/>
            <person name="Krishnakumar V."/>
            <person name="Chan A.P."/>
            <person name="Thibaud-Nissen F."/>
            <person name="Schobel S."/>
            <person name="Town C.D."/>
        </authorList>
    </citation>
    <scope>GENOME REANNOTATION</scope>
    <source>
        <strain>cv. Columbia</strain>
    </source>
</reference>
<reference key="5">
    <citation type="journal article" date="2001" name="BMC Genomics">
        <title>Kinesins in the Arabidopsis genome: a comparative analysis among eukaryotes.</title>
        <authorList>
            <person name="Reddy A.S."/>
            <person name="Day I.S."/>
        </authorList>
    </citation>
    <scope>GENE FAMILY</scope>
</reference>
<reference key="6">
    <citation type="journal article" date="2006" name="BMC Genomics">
        <title>Comprehensive comparative analysis of kinesins in photosynthetic eukaryotes.</title>
        <authorList>
            <person name="Richardson D.N."/>
            <person name="Simmons M.P."/>
            <person name="Reddy A.S."/>
        </authorList>
    </citation>
    <scope>GENE FAMILY</scope>
    <scope>NOMENCLATURE</scope>
</reference>
<reference key="7">
    <citation type="journal article" date="2008" name="Plant Physiol.">
        <title>A class one ADP-ribosylation factor GTPase-activating protein is critical for maintaining directional root hair growth in Arabidopsis thaliana.</title>
        <authorList>
            <person name="Yoo C.-M."/>
            <person name="Wen J."/>
            <person name="Motes C.M."/>
            <person name="Sparks J.A."/>
            <person name="Blancaflor E.B."/>
        </authorList>
    </citation>
    <scope>DISRUPTION PHENOTYPE</scope>
    <scope>SUBCELLULAR LOCATION</scope>
</reference>
<reference key="8">
    <citation type="journal article" date="2011" name="Cytoskeleton">
        <title>An ungrouped plant kinesin accumulates at the preprophase band in a cell cycle-dependent manner.</title>
        <authorList>
            <person name="Malcos J.L."/>
            <person name="Cyr R.J."/>
        </authorList>
    </citation>
    <scope>IDENTIFICATION</scope>
</reference>
<reference key="9">
    <citation type="journal article" date="2012" name="Protoplasma">
        <title>Functions of the Arabidopsis kinesin superfamily of microtubule-based motor proteins.</title>
        <authorList>
            <person name="Zhu C."/>
            <person name="Dixit R."/>
        </authorList>
    </citation>
    <scope>REVIEW</scope>
</reference>
<reference key="10">
    <citation type="journal article" date="2013" name="Front. Plant Sci.">
        <title>Overlapping and divergent signaling pathways for ARK1 and AGD1 in the control of root hair polarity in Arabidopsis thaliana.</title>
        <authorList>
            <person name="Yoo C.M."/>
            <person name="Blancaflor E.B."/>
        </authorList>
    </citation>
    <scope>FUNCTION</scope>
    <scope>DISRUPTION PHENOTYPE</scope>
</reference>
<reference key="11">
    <citation type="journal article" date="2014" name="Plant Cell">
        <title>The microtubule plus-end tracking protein ARMADILLO-REPEAT KINESIN1 promotes microtubule catastrophe in Arabidopsis.</title>
        <authorList>
            <person name="Eng R.C."/>
            <person name="Wasteneys G.O."/>
        </authorList>
    </citation>
    <scope>FUNCTION</scope>
    <scope>DISRUPTION PHENOTYPE</scope>
    <scope>SUBCELLULAR LOCATION</scope>
    <scope>TISSUE SPECIFICITY</scope>
</reference>
<proteinExistence type="evidence at protein level"/>
<gene>
    <name evidence="13" type="primary">KINUC</name>
    <name evidence="17" type="synonym">ARK1</name>
    <name evidence="11" type="synonym">CAE1</name>
    <name evidence="16" type="synonym">MRH2</name>
    <name evidence="15" type="ordered locus">At3g54870</name>
    <name evidence="18" type="ORF">F28P10.150</name>
</gene>
<evidence type="ECO:0000250" key="1">
    <source>
        <dbReference type="UniProtKB" id="Q9FZ06"/>
    </source>
</evidence>
<evidence type="ECO:0000255" key="2"/>
<evidence type="ECO:0000255" key="3">
    <source>
        <dbReference type="PROSITE-ProRule" id="PRU00283"/>
    </source>
</evidence>
<evidence type="ECO:0000256" key="4">
    <source>
        <dbReference type="SAM" id="MobiDB-lite"/>
    </source>
</evidence>
<evidence type="ECO:0000269" key="5">
    <source>
    </source>
</evidence>
<evidence type="ECO:0000269" key="6">
    <source>
    </source>
</evidence>
<evidence type="ECO:0000269" key="7">
    <source>
    </source>
</evidence>
<evidence type="ECO:0000269" key="8">
    <source>
    </source>
</evidence>
<evidence type="ECO:0000269" key="9">
    <source>
    </source>
</evidence>
<evidence type="ECO:0000303" key="10">
    <source>
    </source>
</evidence>
<evidence type="ECO:0000303" key="11">
    <source>
    </source>
</evidence>
<evidence type="ECO:0000303" key="12">
    <source>
    </source>
</evidence>
<evidence type="ECO:0000303" key="13">
    <source>
    </source>
</evidence>
<evidence type="ECO:0000305" key="14"/>
<evidence type="ECO:0000312" key="15">
    <source>
        <dbReference type="Araport" id="AT3G54870"/>
    </source>
</evidence>
<evidence type="ECO:0000312" key="16">
    <source>
        <dbReference type="EMBL" id="ABX58060.1"/>
    </source>
</evidence>
<evidence type="ECO:0000312" key="17">
    <source>
        <dbReference type="EMBL" id="BAF95585.1"/>
    </source>
</evidence>
<evidence type="ECO:0000312" key="18">
    <source>
        <dbReference type="EMBL" id="CAB41097.2"/>
    </source>
</evidence>
<comment type="function">
    <text evidence="5 6 8 9">Acts as a plus-end microtubule-dependent motor protein (PubMed:25159991). Involved in the control of root hair tip growth by promoting microtubule depolymerization and limiting the accumulation of endoplasmic microtubules (PubMed:17957256, PubMed:17971038, PubMed:24400013, PubMed:25159991). In vitro, binds to polymerized actin through ARM repeats, and to polymerized tubulin through N-terminal motor domain (PubMed:17957256).</text>
</comment>
<comment type="subunit">
    <text evidence="5 6">Interacts (via C-terminus) with NEK5.</text>
</comment>
<comment type="subcellular location">
    <subcellularLocation>
        <location evidence="7 9">Cytoplasm</location>
        <location evidence="7 9">Cytoskeleton</location>
    </subcellularLocation>
    <subcellularLocation>
        <location evidence="9">Cytoplasm</location>
        <location evidence="9">Cytoskeleton</location>
        <location evidence="9">Spindle</location>
    </subcellularLocation>
    <subcellularLocation>
        <location evidence="9">Cytoplasm</location>
        <location evidence="9">Cytoskeleton</location>
        <location evidence="9">Phragmoplast</location>
    </subcellularLocation>
    <text evidence="7 9">Colocalizes with microtubules.</text>
</comment>
<comment type="alternative products">
    <event type="alternative splicing"/>
    <isoform>
        <id>Q9SV36-1</id>
        <name>1</name>
        <sequence type="displayed"/>
    </isoform>
    <isoform>
        <id>Q9SV36-2</id>
        <name>2</name>
        <sequence type="described" ref="VSP_059313 VSP_059314"/>
    </isoform>
</comment>
<comment type="tissue specificity">
    <text evidence="5 6 9">Expressed in young root hair-forming cells and in root hair-producing cells at the boundary between the hypocotyl and root. Expressed in cotyledons, young leaves, trichomes and flowers.</text>
</comment>
<comment type="domain">
    <text evidence="1">D-BOX motif functions as a recognition motif for the ubiquitination machinery.</text>
</comment>
<comment type="disruption phenotype">
    <text evidence="7 8 9">Wavy growth phenotype with altered root hairs displaying multiple tips and branches (PubMed:18539780, PubMed:24400013). Reduced microtubules catastrophe frequency and growth rates (PubMed:25159991).</text>
</comment>
<comment type="similarity">
    <text evidence="10">Belongs to the TRAFAC class myosin-kinesin ATPase superfamily. Kinesin family. Ungrouped subfamily.</text>
</comment>
<comment type="sequence caution" evidence="14">
    <conflict type="erroneous gene model prediction">
        <sequence resource="EMBL-CDS" id="CAB41097"/>
    </conflict>
</comment>
<feature type="chain" id="PRO_0000342330" description="Kinesin-like protein KIN-UC">
    <location>
        <begin position="1"/>
        <end position="1051"/>
    </location>
</feature>
<feature type="domain" description="Kinesin motor" evidence="3">
    <location>
        <begin position="104"/>
        <end position="441"/>
    </location>
</feature>
<feature type="repeat" description="ARM 1">
    <location>
        <begin position="792"/>
        <end position="831"/>
    </location>
</feature>
<feature type="repeat" description="ARM 2">
    <location>
        <begin position="833"/>
        <end position="873"/>
    </location>
</feature>
<feature type="repeat" description="ARM 3">
    <location>
        <begin position="875"/>
        <end position="915"/>
    </location>
</feature>
<feature type="repeat" description="ARM 4; degenerate">
    <location>
        <begin position="917"/>
        <end position="956"/>
    </location>
</feature>
<feature type="region of interest" description="Disordered" evidence="4">
    <location>
        <begin position="1"/>
        <end position="39"/>
    </location>
</feature>
<feature type="region of interest" description="Disordered" evidence="4">
    <location>
        <begin position="51"/>
        <end position="109"/>
    </location>
</feature>
<feature type="region of interest" description="Disordered" evidence="4">
    <location>
        <begin position="753"/>
        <end position="788"/>
    </location>
</feature>
<feature type="coiled-coil region" evidence="2">
    <location>
        <begin position="452"/>
        <end position="534"/>
    </location>
</feature>
<feature type="coiled-coil region" evidence="2">
    <location>
        <begin position="568"/>
        <end position="761"/>
    </location>
</feature>
<feature type="short sequence motif" description="D-BOX" evidence="1">
    <location>
        <begin position="411"/>
        <end position="419"/>
    </location>
</feature>
<feature type="compositionally biased region" description="Low complexity" evidence="4">
    <location>
        <begin position="1"/>
        <end position="12"/>
    </location>
</feature>
<feature type="compositionally biased region" description="Low complexity" evidence="4">
    <location>
        <begin position="28"/>
        <end position="39"/>
    </location>
</feature>
<feature type="compositionally biased region" description="Low complexity" evidence="4">
    <location>
        <begin position="64"/>
        <end position="90"/>
    </location>
</feature>
<feature type="compositionally biased region" description="Basic and acidic residues" evidence="4">
    <location>
        <begin position="753"/>
        <end position="766"/>
    </location>
</feature>
<feature type="compositionally biased region" description="Polar residues" evidence="4">
    <location>
        <begin position="772"/>
        <end position="788"/>
    </location>
</feature>
<feature type="binding site" evidence="3">
    <location>
        <begin position="189"/>
        <end position="196"/>
    </location>
    <ligand>
        <name>ATP</name>
        <dbReference type="ChEBI" id="CHEBI:30616"/>
    </ligand>
</feature>
<feature type="splice variant" id="VSP_059313" description="In isoform 2." evidence="14">
    <original>EKFLKLLKEEEGIKGLLTMAQSGNI</original>
    <variation>GKHKIKNFASDDFQYSLYNLCVKIY</variation>
    <location>
        <begin position="917"/>
        <end position="941"/>
    </location>
</feature>
<feature type="splice variant" id="VSP_059314" description="In isoform 2.">
    <location>
        <begin position="942"/>
        <end position="1051"/>
    </location>
</feature>
<accession>Q9SV36</accession>
<accession>A9CP38</accession>
<accession>F4JE41</accession>
<dbReference type="EMBL" id="EU257694">
    <property type="protein sequence ID" value="ABX58060.1"/>
    <property type="molecule type" value="mRNA"/>
</dbReference>
<dbReference type="EMBL" id="AB290928">
    <property type="protein sequence ID" value="BAF95585.1"/>
    <property type="molecule type" value="mRNA"/>
</dbReference>
<dbReference type="EMBL" id="AL049655">
    <property type="protein sequence ID" value="CAB41097.2"/>
    <property type="status" value="ALT_SEQ"/>
    <property type="molecule type" value="Genomic_DNA"/>
</dbReference>
<dbReference type="EMBL" id="CP002686">
    <property type="protein sequence ID" value="AEE79303.1"/>
    <property type="molecule type" value="Genomic_DNA"/>
</dbReference>
<dbReference type="EMBL" id="CP002686">
    <property type="protein sequence ID" value="ANM64395.1"/>
    <property type="molecule type" value="Genomic_DNA"/>
</dbReference>
<dbReference type="PIR" id="T06733">
    <property type="entry name" value="T06733"/>
</dbReference>
<dbReference type="RefSeq" id="NP_001326426.1">
    <molecule id="Q9SV36-1"/>
    <property type="nucleotide sequence ID" value="NM_001339702.1"/>
</dbReference>
<dbReference type="RefSeq" id="NP_191047.3">
    <molecule id="Q9SV36-2"/>
    <property type="nucleotide sequence ID" value="NM_115344.4"/>
</dbReference>
<dbReference type="SMR" id="Q9SV36"/>
<dbReference type="FunCoup" id="Q9SV36">
    <property type="interactions" value="54"/>
</dbReference>
<dbReference type="STRING" id="3702.Q9SV36"/>
<dbReference type="iPTMnet" id="Q9SV36"/>
<dbReference type="PaxDb" id="3702-AT3G54870.1"/>
<dbReference type="ProteomicsDB" id="238217">
    <molecule id="Q9SV36-1"/>
</dbReference>
<dbReference type="EnsemblPlants" id="AT3G54870.1">
    <molecule id="Q9SV36-2"/>
    <property type="protein sequence ID" value="AT3G54870.1"/>
    <property type="gene ID" value="AT3G54870"/>
</dbReference>
<dbReference type="EnsemblPlants" id="AT3G54870.2">
    <molecule id="Q9SV36-1"/>
    <property type="protein sequence ID" value="AT3G54870.2"/>
    <property type="gene ID" value="AT3G54870"/>
</dbReference>
<dbReference type="GeneID" id="824652"/>
<dbReference type="Gramene" id="AT3G54870.1">
    <molecule id="Q9SV36-2"/>
    <property type="protein sequence ID" value="AT3G54870.1"/>
    <property type="gene ID" value="AT3G54870"/>
</dbReference>
<dbReference type="Gramene" id="AT3G54870.2">
    <molecule id="Q9SV36-1"/>
    <property type="protein sequence ID" value="AT3G54870.2"/>
    <property type="gene ID" value="AT3G54870"/>
</dbReference>
<dbReference type="KEGG" id="ath:AT3G54870"/>
<dbReference type="Araport" id="AT3G54870"/>
<dbReference type="TAIR" id="AT3G54870">
    <property type="gene designation" value="MRH2"/>
</dbReference>
<dbReference type="eggNOG" id="KOG0240">
    <property type="taxonomic scope" value="Eukaryota"/>
</dbReference>
<dbReference type="HOGENOM" id="CLU_014436_0_0_1"/>
<dbReference type="InParanoid" id="Q9SV36"/>
<dbReference type="OMA" id="FRTGHNE"/>
<dbReference type="OrthoDB" id="3176171at2759"/>
<dbReference type="PhylomeDB" id="Q9SV36"/>
<dbReference type="PRO" id="PR:Q9SV36"/>
<dbReference type="Proteomes" id="UP000006548">
    <property type="component" value="Chromosome 3"/>
</dbReference>
<dbReference type="ExpressionAtlas" id="Q9SV36">
    <property type="expression patterns" value="baseline and differential"/>
</dbReference>
<dbReference type="GO" id="GO:0005874">
    <property type="term" value="C:microtubule"/>
    <property type="evidence" value="ECO:0007669"/>
    <property type="project" value="UniProtKB-KW"/>
</dbReference>
<dbReference type="GO" id="GO:0009524">
    <property type="term" value="C:phragmoplast"/>
    <property type="evidence" value="ECO:0007669"/>
    <property type="project" value="UniProtKB-SubCell"/>
</dbReference>
<dbReference type="GO" id="GO:0005819">
    <property type="term" value="C:spindle"/>
    <property type="evidence" value="ECO:0007669"/>
    <property type="project" value="UniProtKB-SubCell"/>
</dbReference>
<dbReference type="GO" id="GO:0005524">
    <property type="term" value="F:ATP binding"/>
    <property type="evidence" value="ECO:0007669"/>
    <property type="project" value="UniProtKB-KW"/>
</dbReference>
<dbReference type="GO" id="GO:0008017">
    <property type="term" value="F:microtubule binding"/>
    <property type="evidence" value="ECO:0007669"/>
    <property type="project" value="InterPro"/>
</dbReference>
<dbReference type="GO" id="GO:0003777">
    <property type="term" value="F:microtubule motor activity"/>
    <property type="evidence" value="ECO:0007669"/>
    <property type="project" value="InterPro"/>
</dbReference>
<dbReference type="GO" id="GO:0007018">
    <property type="term" value="P:microtubule-based movement"/>
    <property type="evidence" value="ECO:0007669"/>
    <property type="project" value="InterPro"/>
</dbReference>
<dbReference type="CDD" id="cd00106">
    <property type="entry name" value="KISc"/>
    <property type="match status" value="1"/>
</dbReference>
<dbReference type="FunFam" id="1.25.10.10:FF:000357">
    <property type="entry name" value="Kinesin-like protein"/>
    <property type="match status" value="1"/>
</dbReference>
<dbReference type="FunFam" id="3.40.850.10:FF:000036">
    <property type="entry name" value="Kinesin-like protein"/>
    <property type="match status" value="1"/>
</dbReference>
<dbReference type="Gene3D" id="3.40.850.10">
    <property type="entry name" value="Kinesin motor domain"/>
    <property type="match status" value="1"/>
</dbReference>
<dbReference type="Gene3D" id="1.25.10.10">
    <property type="entry name" value="Leucine-rich Repeat Variant"/>
    <property type="match status" value="1"/>
</dbReference>
<dbReference type="InterPro" id="IPR011989">
    <property type="entry name" value="ARM-like"/>
</dbReference>
<dbReference type="InterPro" id="IPR016024">
    <property type="entry name" value="ARM-type_fold"/>
</dbReference>
<dbReference type="InterPro" id="IPR000225">
    <property type="entry name" value="Armadillo"/>
</dbReference>
<dbReference type="InterPro" id="IPR047149">
    <property type="entry name" value="KIF11-like"/>
</dbReference>
<dbReference type="InterPro" id="IPR019821">
    <property type="entry name" value="Kinesin_motor_CS"/>
</dbReference>
<dbReference type="InterPro" id="IPR001752">
    <property type="entry name" value="Kinesin_motor_dom"/>
</dbReference>
<dbReference type="InterPro" id="IPR036961">
    <property type="entry name" value="Kinesin_motor_dom_sf"/>
</dbReference>
<dbReference type="InterPro" id="IPR027417">
    <property type="entry name" value="P-loop_NTPase"/>
</dbReference>
<dbReference type="PANTHER" id="PTHR47970">
    <property type="entry name" value="KINESIN-LIKE PROTEIN KIF11"/>
    <property type="match status" value="1"/>
</dbReference>
<dbReference type="PANTHER" id="PTHR47970:SF6">
    <property type="entry name" value="KINESIN-LIKE PROTEIN KIN-UC ISOFORM X1"/>
    <property type="match status" value="1"/>
</dbReference>
<dbReference type="Pfam" id="PF00514">
    <property type="entry name" value="Arm"/>
    <property type="match status" value="1"/>
</dbReference>
<dbReference type="Pfam" id="PF00225">
    <property type="entry name" value="Kinesin"/>
    <property type="match status" value="1"/>
</dbReference>
<dbReference type="PRINTS" id="PR00380">
    <property type="entry name" value="KINESINHEAVY"/>
</dbReference>
<dbReference type="SMART" id="SM00185">
    <property type="entry name" value="ARM"/>
    <property type="match status" value="3"/>
</dbReference>
<dbReference type="SMART" id="SM00129">
    <property type="entry name" value="KISc"/>
    <property type="match status" value="1"/>
</dbReference>
<dbReference type="SUPFAM" id="SSF48371">
    <property type="entry name" value="ARM repeat"/>
    <property type="match status" value="1"/>
</dbReference>
<dbReference type="SUPFAM" id="SSF52540">
    <property type="entry name" value="P-loop containing nucleoside triphosphate hydrolases"/>
    <property type="match status" value="1"/>
</dbReference>
<dbReference type="PROSITE" id="PS50176">
    <property type="entry name" value="ARM_REPEAT"/>
    <property type="match status" value="2"/>
</dbReference>
<dbReference type="PROSITE" id="PS00411">
    <property type="entry name" value="KINESIN_MOTOR_1"/>
    <property type="match status" value="1"/>
</dbReference>
<dbReference type="PROSITE" id="PS50067">
    <property type="entry name" value="KINESIN_MOTOR_2"/>
    <property type="match status" value="1"/>
</dbReference>
<name>KINUC_ARATH</name>